<comment type="function">
    <text>Tropomyosin, in association with the troponin complex, plays a central role in the calcium dependent regulation of muscle contraction.</text>
</comment>
<comment type="subunit">
    <text evidence="1">Homodimer.</text>
</comment>
<comment type="domain">
    <text>The molecule is in a coiled coil structure that is formed by 2 polypeptide chains. The sequence exhibits a prominent seven-residues periodicity.</text>
</comment>
<comment type="similarity">
    <text evidence="3">Belongs to the tropomyosin family.</text>
</comment>
<evidence type="ECO:0000250" key="1"/>
<evidence type="ECO:0000256" key="2">
    <source>
        <dbReference type="SAM" id="MobiDB-lite"/>
    </source>
</evidence>
<evidence type="ECO:0000305" key="3"/>
<dbReference type="EMBL" id="AJ314792">
    <property type="protein sequence ID" value="CAC85552.1"/>
    <property type="molecule type" value="mRNA"/>
</dbReference>
<dbReference type="SMR" id="Q95PU1"/>
<dbReference type="eggNOG" id="KOG1003">
    <property type="taxonomic scope" value="Eukaryota"/>
</dbReference>
<dbReference type="OMA" id="EEMDHAP"/>
<dbReference type="OrthoDB" id="128924at2759"/>
<dbReference type="FunFam" id="1.20.5.170:FF:000005">
    <property type="entry name" value="Tropomyosin alpha-1 chain"/>
    <property type="match status" value="1"/>
</dbReference>
<dbReference type="FunFam" id="1.20.5.170:FF:000001">
    <property type="entry name" value="Tropomyosin alpha-1 chain isoform 1"/>
    <property type="match status" value="1"/>
</dbReference>
<dbReference type="FunFam" id="1.20.5.340:FF:000001">
    <property type="entry name" value="Tropomyosin alpha-1 chain isoform 2"/>
    <property type="match status" value="1"/>
</dbReference>
<dbReference type="Gene3D" id="1.20.5.170">
    <property type="match status" value="2"/>
</dbReference>
<dbReference type="Gene3D" id="1.20.5.340">
    <property type="match status" value="1"/>
</dbReference>
<dbReference type="InterPro" id="IPR000533">
    <property type="entry name" value="Tropomyosin"/>
</dbReference>
<dbReference type="PANTHER" id="PTHR19269">
    <property type="entry name" value="TROPOMYOSIN"/>
    <property type="match status" value="1"/>
</dbReference>
<dbReference type="Pfam" id="PF00261">
    <property type="entry name" value="Tropomyosin"/>
    <property type="match status" value="1"/>
</dbReference>
<dbReference type="PRINTS" id="PR00194">
    <property type="entry name" value="TROPOMYOSIN"/>
</dbReference>
<dbReference type="SUPFAM" id="SSF57997">
    <property type="entry name" value="Tropomyosin"/>
    <property type="match status" value="1"/>
</dbReference>
<reference key="1">
    <citation type="submission" date="2001-05" db="EMBL/GenBank/DDBJ databases">
        <title>Characterisation of a E. multilocularis tropomyosin encoding mRNA.</title>
        <authorList>
            <person name="Hubert K."/>
            <person name="Frosch M."/>
            <person name="Brehm K."/>
        </authorList>
    </citation>
    <scope>NUCLEOTIDE SEQUENCE [MRNA]</scope>
</reference>
<name>TPM_ECHMU</name>
<feature type="chain" id="PRO_0000205653" description="Tropomyosin">
    <location>
        <begin position="1"/>
        <end position="284"/>
    </location>
</feature>
<feature type="region of interest" description="Disordered" evidence="2">
    <location>
        <begin position="97"/>
        <end position="140"/>
    </location>
</feature>
<feature type="coiled-coil region">
    <location>
        <begin position="1"/>
        <end position="284"/>
    </location>
</feature>
<feature type="compositionally biased region" description="Polar residues" evidence="2">
    <location>
        <begin position="101"/>
        <end position="110"/>
    </location>
</feature>
<feature type="compositionally biased region" description="Basic and acidic residues" evidence="2">
    <location>
        <begin position="111"/>
        <end position="140"/>
    </location>
</feature>
<protein>
    <recommendedName>
        <fullName>Tropomyosin</fullName>
    </recommendedName>
</protein>
<organism>
    <name type="scientific">Echinococcus multilocularis</name>
    <name type="common">Fox tapeworm</name>
    <dbReference type="NCBI Taxonomy" id="6211"/>
    <lineage>
        <taxon>Eukaryota</taxon>
        <taxon>Metazoa</taxon>
        <taxon>Spiralia</taxon>
        <taxon>Lophotrochozoa</taxon>
        <taxon>Platyhelminthes</taxon>
        <taxon>Cestoda</taxon>
        <taxon>Eucestoda</taxon>
        <taxon>Cyclophyllidea</taxon>
        <taxon>Taeniidae</taxon>
        <taxon>Echinococcus</taxon>
    </lineage>
</organism>
<proteinExistence type="evidence at transcript level"/>
<sequence length="284" mass="32987">MDSIKKKMMAMKLEKENALEKAINLENQLKEKAKDFEKKEEEMNDWLSKVKNIQTEVDTVQESLQEAISKLEETEKRATNAEAEVAAMTRRIRLLEEDFEQSSGRLTETSTKLDDASKAAEESERNRKTLETRSISDDERMAQLEEQVKEAKYIAEDAERKYDEAARRLAVTEVDLERAESRLETSESKIVELEEELRIVGNNMKSLEVSEQESLQREESYEETIRDLTERLKTAEQRAAEAERQVSKLQNEVDRLEDELLSEKERYRAISGELDTTFAELTSF</sequence>
<keyword id="KW-0175">Coiled coil</keyword>
<keyword id="KW-0677">Repeat</keyword>
<accession>Q95PU1</accession>